<gene>
    <name evidence="10" type="primary">Lilrb4b</name>
    <name evidence="9" type="synonym">Gp49</name>
    <name evidence="8" type="synonym">Gp49a</name>
</gene>
<comment type="function">
    <text evidence="6">Plays a role in mast cell activation.</text>
</comment>
<comment type="subunit">
    <text evidence="6">Monomer and homodimer.</text>
</comment>
<comment type="subcellular location">
    <subcellularLocation>
        <location evidence="4 5 6">Cell membrane</location>
        <topology evidence="1">Single-pass type I membrane protein</topology>
    </subcellularLocation>
</comment>
<comment type="tissue specificity">
    <text evidence="4 5">Expressed on mast cells (at protein level) (PubMed:10630292, PubMed:10982834). Also expressed at much lower levels on natural killer cells (at protein level) (PubMed:10982834).</text>
</comment>
<comment type="domain">
    <text evidence="4">In contrast to the related Lilrb4a protein, does not contain any copies of a cytoplasmic motif that is referred to as the immunoreceptor tyrosine-based inhibitor motif (ITIM).</text>
</comment>
<sequence>MIAMLTVLLYLALILEPRTAVQAGHLPKPIIWAEPGSVIAAYTSVIIWCWGSWEAQYYYLDKEKSVNPWDTEVPLENRNKTKFKIRFMTASYAGIYNCYYKSAAGFSEHSDAMELVMTGAYENPSLSVYPSSNVTSGVSISFKCSSSTLFGRFILIQEGKHGLSWTLDSQHQANQPTHATFVLDAVAPNHNGTFRCYGFFRNEPQVWSKPSNSLDLMISETKEQSCTPTEDGLETYQKILIGVLVSFLLLFFLLLFLILIGYQCRHKNKANASVKNTQSEDNAELNSWNPQNEDPPRELCTPR</sequence>
<name>LRB4B_MOUSE</name>
<keyword id="KW-1003">Cell membrane</keyword>
<keyword id="KW-0903">Direct protein sequencing</keyword>
<keyword id="KW-1015">Disulfide bond</keyword>
<keyword id="KW-0325">Glycoprotein</keyword>
<keyword id="KW-0391">Immunity</keyword>
<keyword id="KW-0393">Immunoglobulin domain</keyword>
<keyword id="KW-0472">Membrane</keyword>
<keyword id="KW-0675">Receptor</keyword>
<keyword id="KW-1185">Reference proteome</keyword>
<keyword id="KW-0677">Repeat</keyword>
<keyword id="KW-0732">Signal</keyword>
<keyword id="KW-0812">Transmembrane</keyword>
<keyword id="KW-1133">Transmembrane helix</keyword>
<organism>
    <name type="scientific">Mus musculus</name>
    <name type="common">Mouse</name>
    <dbReference type="NCBI Taxonomy" id="10090"/>
    <lineage>
        <taxon>Eukaryota</taxon>
        <taxon>Metazoa</taxon>
        <taxon>Chordata</taxon>
        <taxon>Craniata</taxon>
        <taxon>Vertebrata</taxon>
        <taxon>Euteleostomi</taxon>
        <taxon>Mammalia</taxon>
        <taxon>Eutheria</taxon>
        <taxon>Euarchontoglires</taxon>
        <taxon>Glires</taxon>
        <taxon>Rodentia</taxon>
        <taxon>Myomorpha</taxon>
        <taxon>Muroidea</taxon>
        <taxon>Muridae</taxon>
        <taxon>Murinae</taxon>
        <taxon>Mus</taxon>
        <taxon>Mus</taxon>
    </lineage>
</organism>
<feature type="signal peptide" evidence="7">
    <location>
        <begin position="1"/>
        <end position="23"/>
    </location>
</feature>
<feature type="chain" id="PRO_0000014767" description="Leukocyte immunoglobulin-like receptor subfamily B member 4B">
    <location>
        <begin position="24"/>
        <end position="303"/>
    </location>
</feature>
<feature type="topological domain" description="Extracellular" evidence="1">
    <location>
        <begin position="24"/>
        <end position="238"/>
    </location>
</feature>
<feature type="transmembrane region" description="Helical" evidence="1">
    <location>
        <begin position="239"/>
        <end position="260"/>
    </location>
</feature>
<feature type="topological domain" description="Cytoplasmic" evidence="1">
    <location>
        <begin position="261"/>
        <end position="303"/>
    </location>
</feature>
<feature type="domain" description="Ig-like C2-type 1">
    <location>
        <begin position="42"/>
        <end position="123"/>
    </location>
</feature>
<feature type="domain" description="Ig-like C2-type 2">
    <location>
        <begin position="124"/>
        <end position="212"/>
    </location>
</feature>
<feature type="region of interest" description="Disordered" evidence="3">
    <location>
        <begin position="275"/>
        <end position="303"/>
    </location>
</feature>
<feature type="compositionally biased region" description="Polar residues" evidence="3">
    <location>
        <begin position="275"/>
        <end position="292"/>
    </location>
</feature>
<feature type="glycosylation site" description="N-linked (GlcNAc...) asparagine" evidence="1">
    <location>
        <position position="79"/>
    </location>
</feature>
<feature type="glycosylation site" description="N-linked (GlcNAc...) asparagine" evidence="1">
    <location>
        <position position="133"/>
    </location>
</feature>
<feature type="glycosylation site" description="N-linked (GlcNAc...) asparagine" evidence="1">
    <location>
        <position position="191"/>
    </location>
</feature>
<feature type="disulfide bond" evidence="2">
    <location>
        <begin position="49"/>
        <end position="98"/>
    </location>
</feature>
<feature type="disulfide bond" evidence="2">
    <location>
        <begin position="144"/>
        <end position="196"/>
    </location>
</feature>
<feature type="mutagenesis site" description="Abolishes mast cell activation and homodimerization." evidence="6">
    <original>C</original>
    <variation>F</variation>
    <location>
        <position position="226"/>
    </location>
</feature>
<dbReference type="EMBL" id="M65027">
    <property type="protein sequence ID" value="AAA37479.1"/>
    <property type="molecule type" value="mRNA"/>
</dbReference>
<dbReference type="EMBL" id="AF141314">
    <property type="protein sequence ID" value="AAF32156.2"/>
    <property type="molecule type" value="Genomic_DNA"/>
</dbReference>
<dbReference type="CCDS" id="CCDS23831.1"/>
<dbReference type="PIR" id="A40807">
    <property type="entry name" value="A40807"/>
</dbReference>
<dbReference type="RefSeq" id="NP_032173.1">
    <property type="nucleotide sequence ID" value="NM_008147.3"/>
</dbReference>
<dbReference type="SMR" id="Q61450"/>
<dbReference type="FunCoup" id="Q61450">
    <property type="interactions" value="24"/>
</dbReference>
<dbReference type="STRING" id="10090.ENSMUSP00000099958"/>
<dbReference type="GlyCosmos" id="Q61450">
    <property type="glycosylation" value="3 sites, No reported glycans"/>
</dbReference>
<dbReference type="GlyGen" id="Q61450">
    <property type="glycosylation" value="3 sites"/>
</dbReference>
<dbReference type="PaxDb" id="10090-ENSMUSP00000099958"/>
<dbReference type="ProteomicsDB" id="271032"/>
<dbReference type="DNASU" id="14727"/>
<dbReference type="Ensembl" id="ENSMUST00000102894.6">
    <property type="protein sequence ID" value="ENSMUSP00000099958.4"/>
    <property type="gene ID" value="ENSMUSG00000112023.2"/>
</dbReference>
<dbReference type="GeneID" id="14727"/>
<dbReference type="KEGG" id="mmu:14727"/>
<dbReference type="UCSC" id="uc007fam.2">
    <property type="organism name" value="mouse"/>
</dbReference>
<dbReference type="AGR" id="MGI:102702"/>
<dbReference type="CTD" id="14727"/>
<dbReference type="MGI" id="MGI:102702">
    <property type="gene designation" value="Lilrb4b"/>
</dbReference>
<dbReference type="VEuPathDB" id="HostDB:ENSMUSG00000112023"/>
<dbReference type="eggNOG" id="ENOG502RU0A">
    <property type="taxonomic scope" value="Eukaryota"/>
</dbReference>
<dbReference type="GeneTree" id="ENSGT01100000263478"/>
<dbReference type="HOGENOM" id="CLU_021100_0_0_1"/>
<dbReference type="InParanoid" id="Q61450"/>
<dbReference type="OMA" id="VTPNYRW"/>
<dbReference type="OrthoDB" id="9629903at2759"/>
<dbReference type="PhylomeDB" id="Q61450"/>
<dbReference type="TreeFam" id="TF336644"/>
<dbReference type="BioGRID-ORCS" id="14727">
    <property type="hits" value="0 hits in 43 CRISPR screens"/>
</dbReference>
<dbReference type="PRO" id="PR:Q61450"/>
<dbReference type="Proteomes" id="UP000000589">
    <property type="component" value="Chromosome 10"/>
</dbReference>
<dbReference type="RNAct" id="Q61450">
    <property type="molecule type" value="protein"/>
</dbReference>
<dbReference type="Bgee" id="ENSMUSG00000112023">
    <property type="expression patterns" value="Expressed in granulocyte and 46 other cell types or tissues"/>
</dbReference>
<dbReference type="ExpressionAtlas" id="Q61450">
    <property type="expression patterns" value="baseline and differential"/>
</dbReference>
<dbReference type="GO" id="GO:0009986">
    <property type="term" value="C:cell surface"/>
    <property type="evidence" value="ECO:0000314"/>
    <property type="project" value="UniProtKB"/>
</dbReference>
<dbReference type="GO" id="GO:0005886">
    <property type="term" value="C:plasma membrane"/>
    <property type="evidence" value="ECO:0007669"/>
    <property type="project" value="UniProtKB-SubCell"/>
</dbReference>
<dbReference type="GO" id="GO:0045576">
    <property type="term" value="P:mast cell activation"/>
    <property type="evidence" value="ECO:0000314"/>
    <property type="project" value="UniProtKB"/>
</dbReference>
<dbReference type="FunFam" id="2.60.40.10:FF:000049">
    <property type="entry name" value="Leukocyte immunoglobulin-like receptor subfamily B member 1"/>
    <property type="match status" value="2"/>
</dbReference>
<dbReference type="Gene3D" id="2.60.40.10">
    <property type="entry name" value="Immunoglobulins"/>
    <property type="match status" value="2"/>
</dbReference>
<dbReference type="InterPro" id="IPR007110">
    <property type="entry name" value="Ig-like_dom"/>
</dbReference>
<dbReference type="InterPro" id="IPR036179">
    <property type="entry name" value="Ig-like_dom_sf"/>
</dbReference>
<dbReference type="InterPro" id="IPR013783">
    <property type="entry name" value="Ig-like_fold"/>
</dbReference>
<dbReference type="InterPro" id="IPR050412">
    <property type="entry name" value="Ig-like_Receptors_ImmuneReg"/>
</dbReference>
<dbReference type="PANTHER" id="PTHR11738:SF181">
    <property type="entry name" value="LEUKOCYTE IMMUNOGLOBULIN-LIKE RECEPTOR SUBFAMILY B MEMBER 4A-RELATED"/>
    <property type="match status" value="1"/>
</dbReference>
<dbReference type="PANTHER" id="PTHR11738">
    <property type="entry name" value="MHC CLASS I NK CELL RECEPTOR"/>
    <property type="match status" value="1"/>
</dbReference>
<dbReference type="Pfam" id="PF13895">
    <property type="entry name" value="Ig_2"/>
    <property type="match status" value="1"/>
</dbReference>
<dbReference type="SUPFAM" id="SSF48726">
    <property type="entry name" value="Immunoglobulin"/>
    <property type="match status" value="2"/>
</dbReference>
<dbReference type="PROSITE" id="PS50835">
    <property type="entry name" value="IG_LIKE"/>
    <property type="match status" value="1"/>
</dbReference>
<protein>
    <recommendedName>
        <fullName evidence="10">Leukocyte immunoglobulin-like receptor subfamily B member 4B</fullName>
        <shortName>Mast cell surface glycoprotein Gp49A</shortName>
    </recommendedName>
</protein>
<proteinExistence type="evidence at protein level"/>
<evidence type="ECO:0000255" key="1"/>
<evidence type="ECO:0000255" key="2">
    <source>
        <dbReference type="PROSITE-ProRule" id="PRU00114"/>
    </source>
</evidence>
<evidence type="ECO:0000256" key="3">
    <source>
        <dbReference type="SAM" id="MobiDB-lite"/>
    </source>
</evidence>
<evidence type="ECO:0000269" key="4">
    <source>
    </source>
</evidence>
<evidence type="ECO:0000269" key="5">
    <source>
    </source>
</evidence>
<evidence type="ECO:0000269" key="6">
    <source>
    </source>
</evidence>
<evidence type="ECO:0000269" key="7">
    <source>
    </source>
</evidence>
<evidence type="ECO:0000303" key="8">
    <source>
    </source>
</evidence>
<evidence type="ECO:0000303" key="9">
    <source>
    </source>
</evidence>
<evidence type="ECO:0000312" key="10">
    <source>
        <dbReference type="MGI" id="MGI:102702"/>
    </source>
</evidence>
<accession>Q61450</accession>
<accession>Q549E3</accession>
<reference key="1">
    <citation type="journal article" date="1991" name="J. Biol. Chem.">
        <title>Molecular cloning of gp49, a cell-surface antigen that is preferentially expressed by mouse mast cell progenitors and is a new member of the immunoglobulin superfamily.</title>
        <authorList>
            <person name="Arm J.P."/>
            <person name="Gurish M.F."/>
            <person name="Reynolds D.S."/>
            <person name="Scott H.C."/>
            <person name="Gartner C.S."/>
            <person name="Austen K.F."/>
            <person name="Katz H.R."/>
        </authorList>
    </citation>
    <scope>NUCLEOTIDE SEQUENCE [MRNA]</scope>
    <scope>PROTEIN SEQUENCE OF 24-45</scope>
    <source>
        <strain>BALB/cJ</strain>
        <tissue>Mast cell</tissue>
    </source>
</reference>
<reference key="2">
    <citation type="journal article" date="1999" name="Immunogenetics">
        <title>The gp49A gene has extensive sequence conservation with the gp49B gene and provides gp49A protein, a unique member of a large family of activating and inhibitory receptors of the immunoglobulin superfamily.</title>
        <authorList>
            <person name="McCormick M.J."/>
            <person name="Castells M.C."/>
            <person name="Austen K.F."/>
            <person name="Katz H.R."/>
        </authorList>
    </citation>
    <scope>NUCLEOTIDE SEQUENCE [GENOMIC DNA]</scope>
    <scope>SUBCELLULAR LOCATION</scope>
    <scope>TISSUE SPECIFICITY</scope>
    <scope>DOMAIN</scope>
    <source>
        <strain>BALB/cJ</strain>
    </source>
</reference>
<reference key="3">
    <citation type="journal article" date="2000" name="J. Immunol.">
        <title>Stimulatory function of gp49A, a murine Ig-like receptor, in rat basophilic leukemia cells.</title>
        <authorList>
            <person name="Lee K.H."/>
            <person name="Ono M."/>
            <person name="Inui M."/>
            <person name="Yuasa T."/>
            <person name="Takai T."/>
        </authorList>
    </citation>
    <scope>FUNCTION</scope>
    <scope>SUBUNIT</scope>
    <scope>SUBCELLULAR LOCATION</scope>
    <scope>MUTAGENESIS OF CYS-226</scope>
</reference>
<reference key="4">
    <citation type="journal article" date="2000" name="Mol. Cell. Biol.">
        <title>Natural killer cells and mast cells from gp49B null mutant mice are functional.</title>
        <authorList>
            <person name="Rojo S."/>
            <person name="Stebbins C.C."/>
            <person name="Peterson M.E."/>
            <person name="Dombrowicz D."/>
            <person name="Wagtmann N."/>
            <person name="Long E.O."/>
        </authorList>
    </citation>
    <scope>SUBCELLULAR LOCATION</scope>
    <scope>TISSUE SPECIFICITY</scope>
</reference>